<organism>
    <name type="scientific">Yersinia pseudotuberculosis serotype IB (strain PB1/+)</name>
    <dbReference type="NCBI Taxonomy" id="502801"/>
    <lineage>
        <taxon>Bacteria</taxon>
        <taxon>Pseudomonadati</taxon>
        <taxon>Pseudomonadota</taxon>
        <taxon>Gammaproteobacteria</taxon>
        <taxon>Enterobacterales</taxon>
        <taxon>Yersiniaceae</taxon>
        <taxon>Yersinia</taxon>
    </lineage>
</organism>
<protein>
    <recommendedName>
        <fullName evidence="1">Potassium-transporting ATPase ATP-binding subunit</fullName>
        <ecNumber evidence="1">7.2.2.6</ecNumber>
    </recommendedName>
    <alternativeName>
        <fullName evidence="1">ATP phosphohydrolase [potassium-transporting] B chain</fullName>
    </alternativeName>
    <alternativeName>
        <fullName evidence="1">Potassium-binding and translocating subunit B</fullName>
    </alternativeName>
    <alternativeName>
        <fullName evidence="1">Potassium-translocating ATPase B chain</fullName>
    </alternativeName>
</protein>
<reference key="1">
    <citation type="submission" date="2008-04" db="EMBL/GenBank/DDBJ databases">
        <title>Complete sequence of Yersinia pseudotuberculosis PB1/+.</title>
        <authorList>
            <person name="Copeland A."/>
            <person name="Lucas S."/>
            <person name="Lapidus A."/>
            <person name="Glavina del Rio T."/>
            <person name="Dalin E."/>
            <person name="Tice H."/>
            <person name="Bruce D."/>
            <person name="Goodwin L."/>
            <person name="Pitluck S."/>
            <person name="Munk A.C."/>
            <person name="Brettin T."/>
            <person name="Detter J.C."/>
            <person name="Han C."/>
            <person name="Tapia R."/>
            <person name="Schmutz J."/>
            <person name="Larimer F."/>
            <person name="Land M."/>
            <person name="Hauser L."/>
            <person name="Challacombe J.F."/>
            <person name="Green L."/>
            <person name="Lindler L.E."/>
            <person name="Nikolich M.P."/>
            <person name="Richardson P."/>
        </authorList>
    </citation>
    <scope>NUCLEOTIDE SEQUENCE [LARGE SCALE GENOMIC DNA]</scope>
    <source>
        <strain>PB1/+</strain>
    </source>
</reference>
<accession>B2KA78</accession>
<name>KDPB_YERPB</name>
<evidence type="ECO:0000255" key="1">
    <source>
        <dbReference type="HAMAP-Rule" id="MF_00285"/>
    </source>
</evidence>
<sequence>MTHKQRAIFEPALVRTALLDAVKKLDPRVQWRNPVMFVVYLGSWLTTLIWLDILSGHTTGSAMFTGSIALWLWFTVLFANMAEALAEGRSKAQAASLRGVKKTSWAKKLSEARVDAPQEKVSADSLRKGDLVLIEAGDTVPCDGEVLEGGASVDESAITGESAPVIRESGGDFSSVTGGTRVLSDWLVVECRVNPGETFLDRMIAMVEGAKRRKTPNEVALTILLVALTIVFLLATATLYPFSVFSVEASQAGSPVTITVLVALLVCLIPTTIGGLLSAIGVAGMSRMLGANVIATSGRAVEAAGDVDVLLLDKTGTITLGNRQASEFLPAPGVTEQQLADAAQLSSLADETPEGRSIVVLAKQRFNLRERDLHSLNATFIPFSAQTRMSGVNVQERMIRKGAVDAIRRHVESNQGHFPPAVDDLVASVARTGGTPLVVAEGSRVLGVVALKDIVKGGIKERFAELRKMGIKTVMITGDNRLTAAAIAAEAGVDDFLAEATPEAKLALIRQYQAEGRLVAMTGDGTNDAPALAQADVAVAMNSGTQAAKEAGNMVDLDSNPTKLIEVVHIGKQMLMTRGSLTTFSIANDVAKYFAIIPAAFAATYPQLNALNIMQLHSPSSAILSAVIFNALVIVFLIPLALKGVSYKAMSAAALLRRNLWIYGLGGLLVPFVGIKLIDLLLTALNMG</sequence>
<dbReference type="EC" id="7.2.2.6" evidence="1"/>
<dbReference type="EMBL" id="CP001048">
    <property type="protein sequence ID" value="ACC89989.1"/>
    <property type="molecule type" value="Genomic_DNA"/>
</dbReference>
<dbReference type="RefSeq" id="WP_002209651.1">
    <property type="nucleotide sequence ID" value="NZ_CP009780.1"/>
</dbReference>
<dbReference type="SMR" id="B2KA78"/>
<dbReference type="GeneID" id="57976002"/>
<dbReference type="KEGG" id="ypb:YPTS_3032"/>
<dbReference type="PATRIC" id="fig|502801.10.peg.2462"/>
<dbReference type="GO" id="GO:0005886">
    <property type="term" value="C:plasma membrane"/>
    <property type="evidence" value="ECO:0007669"/>
    <property type="project" value="UniProtKB-SubCell"/>
</dbReference>
<dbReference type="GO" id="GO:0005524">
    <property type="term" value="F:ATP binding"/>
    <property type="evidence" value="ECO:0007669"/>
    <property type="project" value="UniProtKB-UniRule"/>
</dbReference>
<dbReference type="GO" id="GO:0016887">
    <property type="term" value="F:ATP hydrolysis activity"/>
    <property type="evidence" value="ECO:0007669"/>
    <property type="project" value="InterPro"/>
</dbReference>
<dbReference type="GO" id="GO:0000287">
    <property type="term" value="F:magnesium ion binding"/>
    <property type="evidence" value="ECO:0007669"/>
    <property type="project" value="UniProtKB-UniRule"/>
</dbReference>
<dbReference type="GO" id="GO:0008556">
    <property type="term" value="F:P-type potassium transmembrane transporter activity"/>
    <property type="evidence" value="ECO:0007669"/>
    <property type="project" value="UniProtKB-UniRule"/>
</dbReference>
<dbReference type="CDD" id="cd02078">
    <property type="entry name" value="P-type_ATPase_K"/>
    <property type="match status" value="1"/>
</dbReference>
<dbReference type="FunFam" id="2.70.150.10:FF:000010">
    <property type="entry name" value="Potassium-transporting ATPase ATP-binding subunit"/>
    <property type="match status" value="1"/>
</dbReference>
<dbReference type="FunFam" id="3.40.1110.10:FF:000007">
    <property type="entry name" value="Potassium-transporting ATPase ATP-binding subunit"/>
    <property type="match status" value="1"/>
</dbReference>
<dbReference type="Gene3D" id="3.40.1110.10">
    <property type="entry name" value="Calcium-transporting ATPase, cytoplasmic domain N"/>
    <property type="match status" value="1"/>
</dbReference>
<dbReference type="Gene3D" id="2.70.150.10">
    <property type="entry name" value="Calcium-transporting ATPase, cytoplasmic transduction domain A"/>
    <property type="match status" value="1"/>
</dbReference>
<dbReference type="Gene3D" id="3.40.50.1000">
    <property type="entry name" value="HAD superfamily/HAD-like"/>
    <property type="match status" value="1"/>
</dbReference>
<dbReference type="HAMAP" id="MF_00285">
    <property type="entry name" value="KdpB"/>
    <property type="match status" value="1"/>
</dbReference>
<dbReference type="InterPro" id="IPR023299">
    <property type="entry name" value="ATPase_P-typ_cyto_dom_N"/>
</dbReference>
<dbReference type="InterPro" id="IPR018303">
    <property type="entry name" value="ATPase_P-typ_P_site"/>
</dbReference>
<dbReference type="InterPro" id="IPR023298">
    <property type="entry name" value="ATPase_P-typ_TM_dom_sf"/>
</dbReference>
<dbReference type="InterPro" id="IPR008250">
    <property type="entry name" value="ATPase_P-typ_transduc_dom_A_sf"/>
</dbReference>
<dbReference type="InterPro" id="IPR036412">
    <property type="entry name" value="HAD-like_sf"/>
</dbReference>
<dbReference type="InterPro" id="IPR023214">
    <property type="entry name" value="HAD_sf"/>
</dbReference>
<dbReference type="InterPro" id="IPR006391">
    <property type="entry name" value="P-type_ATPase_bsu_IA"/>
</dbReference>
<dbReference type="InterPro" id="IPR001757">
    <property type="entry name" value="P_typ_ATPase"/>
</dbReference>
<dbReference type="InterPro" id="IPR044492">
    <property type="entry name" value="P_typ_ATPase_HD_dom"/>
</dbReference>
<dbReference type="NCBIfam" id="TIGR01494">
    <property type="entry name" value="ATPase_P-type"/>
    <property type="match status" value="2"/>
</dbReference>
<dbReference type="NCBIfam" id="TIGR01497">
    <property type="entry name" value="kdpB"/>
    <property type="match status" value="1"/>
</dbReference>
<dbReference type="PANTHER" id="PTHR43743">
    <property type="entry name" value="POTASSIUM-TRANSPORTING ATPASE ATP-BINDING SUBUNIT"/>
    <property type="match status" value="1"/>
</dbReference>
<dbReference type="PANTHER" id="PTHR43743:SF1">
    <property type="entry name" value="POTASSIUM-TRANSPORTING ATPASE ATP-BINDING SUBUNIT"/>
    <property type="match status" value="1"/>
</dbReference>
<dbReference type="Pfam" id="PF00122">
    <property type="entry name" value="E1-E2_ATPase"/>
    <property type="match status" value="1"/>
</dbReference>
<dbReference type="Pfam" id="PF00702">
    <property type="entry name" value="Hydrolase"/>
    <property type="match status" value="1"/>
</dbReference>
<dbReference type="PRINTS" id="PR00119">
    <property type="entry name" value="CATATPASE"/>
</dbReference>
<dbReference type="SFLD" id="SFLDG00002">
    <property type="entry name" value="C1.7:_P-type_atpase_like"/>
    <property type="match status" value="1"/>
</dbReference>
<dbReference type="SFLD" id="SFLDF00027">
    <property type="entry name" value="p-type_atpase"/>
    <property type="match status" value="1"/>
</dbReference>
<dbReference type="SUPFAM" id="SSF81653">
    <property type="entry name" value="Calcium ATPase, transduction domain A"/>
    <property type="match status" value="1"/>
</dbReference>
<dbReference type="SUPFAM" id="SSF81665">
    <property type="entry name" value="Calcium ATPase, transmembrane domain M"/>
    <property type="match status" value="1"/>
</dbReference>
<dbReference type="SUPFAM" id="SSF56784">
    <property type="entry name" value="HAD-like"/>
    <property type="match status" value="1"/>
</dbReference>
<dbReference type="SUPFAM" id="SSF81660">
    <property type="entry name" value="Metal cation-transporting ATPase, ATP-binding domain N"/>
    <property type="match status" value="1"/>
</dbReference>
<dbReference type="PROSITE" id="PS00154">
    <property type="entry name" value="ATPASE_E1_E2"/>
    <property type="match status" value="1"/>
</dbReference>
<feature type="chain" id="PRO_1000114966" description="Potassium-transporting ATPase ATP-binding subunit">
    <location>
        <begin position="1"/>
        <end position="688"/>
    </location>
</feature>
<feature type="transmembrane region" description="Helical" evidence="1">
    <location>
        <begin position="34"/>
        <end position="54"/>
    </location>
</feature>
<feature type="transmembrane region" description="Helical" evidence="1">
    <location>
        <begin position="62"/>
        <end position="82"/>
    </location>
</feature>
<feature type="transmembrane region" description="Helical" evidence="1">
    <location>
        <begin position="219"/>
        <end position="239"/>
    </location>
</feature>
<feature type="transmembrane region" description="Helical" evidence="1">
    <location>
        <begin position="260"/>
        <end position="280"/>
    </location>
</feature>
<feature type="transmembrane region" description="Helical" evidence="1">
    <location>
        <begin position="594"/>
        <end position="614"/>
    </location>
</feature>
<feature type="transmembrane region" description="Helical" evidence="1">
    <location>
        <begin position="622"/>
        <end position="642"/>
    </location>
</feature>
<feature type="transmembrane region" description="Helical" evidence="1">
    <location>
        <begin position="662"/>
        <end position="682"/>
    </location>
</feature>
<feature type="active site" description="4-aspartylphosphate intermediate" evidence="1">
    <location>
        <position position="313"/>
    </location>
</feature>
<feature type="binding site" evidence="1">
    <location>
        <position position="350"/>
    </location>
    <ligand>
        <name>ATP</name>
        <dbReference type="ChEBI" id="CHEBI:30616"/>
    </ligand>
</feature>
<feature type="binding site" evidence="1">
    <location>
        <position position="354"/>
    </location>
    <ligand>
        <name>ATP</name>
        <dbReference type="ChEBI" id="CHEBI:30616"/>
    </ligand>
</feature>
<feature type="binding site" evidence="1">
    <location>
        <begin position="383"/>
        <end position="390"/>
    </location>
    <ligand>
        <name>ATP</name>
        <dbReference type="ChEBI" id="CHEBI:30616"/>
    </ligand>
</feature>
<feature type="binding site" evidence="1">
    <location>
        <position position="401"/>
    </location>
    <ligand>
        <name>ATP</name>
        <dbReference type="ChEBI" id="CHEBI:30616"/>
    </ligand>
</feature>
<feature type="binding site" evidence="1">
    <location>
        <position position="524"/>
    </location>
    <ligand>
        <name>Mg(2+)</name>
        <dbReference type="ChEBI" id="CHEBI:18420"/>
    </ligand>
</feature>
<feature type="binding site" evidence="1">
    <location>
        <position position="528"/>
    </location>
    <ligand>
        <name>Mg(2+)</name>
        <dbReference type="ChEBI" id="CHEBI:18420"/>
    </ligand>
</feature>
<comment type="function">
    <text evidence="1">Part of the high-affinity ATP-driven potassium transport (or Kdp) system, which catalyzes the hydrolysis of ATP coupled with the electrogenic transport of potassium into the cytoplasm. This subunit is responsible for energy coupling to the transport system and for the release of the potassium ions to the cytoplasm.</text>
</comment>
<comment type="catalytic activity">
    <reaction evidence="1">
        <text>K(+)(out) + ATP + H2O = K(+)(in) + ADP + phosphate + H(+)</text>
        <dbReference type="Rhea" id="RHEA:16777"/>
        <dbReference type="ChEBI" id="CHEBI:15377"/>
        <dbReference type="ChEBI" id="CHEBI:15378"/>
        <dbReference type="ChEBI" id="CHEBI:29103"/>
        <dbReference type="ChEBI" id="CHEBI:30616"/>
        <dbReference type="ChEBI" id="CHEBI:43474"/>
        <dbReference type="ChEBI" id="CHEBI:456216"/>
        <dbReference type="EC" id="7.2.2.6"/>
    </reaction>
    <physiologicalReaction direction="left-to-right" evidence="1">
        <dbReference type="Rhea" id="RHEA:16778"/>
    </physiologicalReaction>
</comment>
<comment type="subunit">
    <text evidence="1">The system is composed of three essential subunits: KdpA, KdpB and KdpC.</text>
</comment>
<comment type="subcellular location">
    <subcellularLocation>
        <location evidence="1">Cell inner membrane</location>
        <topology evidence="1">Multi-pass membrane protein</topology>
    </subcellularLocation>
</comment>
<comment type="similarity">
    <text evidence="1">Belongs to the cation transport ATPase (P-type) (TC 3.A.3) family. Type IA subfamily.</text>
</comment>
<keyword id="KW-0067">ATP-binding</keyword>
<keyword id="KW-0997">Cell inner membrane</keyword>
<keyword id="KW-1003">Cell membrane</keyword>
<keyword id="KW-0406">Ion transport</keyword>
<keyword id="KW-0460">Magnesium</keyword>
<keyword id="KW-0472">Membrane</keyword>
<keyword id="KW-0479">Metal-binding</keyword>
<keyword id="KW-0547">Nucleotide-binding</keyword>
<keyword id="KW-0597">Phosphoprotein</keyword>
<keyword id="KW-0630">Potassium</keyword>
<keyword id="KW-0633">Potassium transport</keyword>
<keyword id="KW-1278">Translocase</keyword>
<keyword id="KW-0812">Transmembrane</keyword>
<keyword id="KW-1133">Transmembrane helix</keyword>
<keyword id="KW-0813">Transport</keyword>
<proteinExistence type="inferred from homology"/>
<gene>
    <name evidence="1" type="primary">kdpB</name>
    <name type="ordered locus">YPTS_3032</name>
</gene>